<organism>
    <name type="scientific">Homo sapiens</name>
    <name type="common">Human</name>
    <dbReference type="NCBI Taxonomy" id="9606"/>
    <lineage>
        <taxon>Eukaryota</taxon>
        <taxon>Metazoa</taxon>
        <taxon>Chordata</taxon>
        <taxon>Craniata</taxon>
        <taxon>Vertebrata</taxon>
        <taxon>Euteleostomi</taxon>
        <taxon>Mammalia</taxon>
        <taxon>Eutheria</taxon>
        <taxon>Euarchontoglires</taxon>
        <taxon>Primates</taxon>
        <taxon>Haplorrhini</taxon>
        <taxon>Catarrhini</taxon>
        <taxon>Hominidae</taxon>
        <taxon>Homo</taxon>
    </lineage>
</organism>
<gene>
    <name evidence="13 15" type="primary">SCAF8</name>
    <name evidence="11" type="synonym">CCAP7</name>
    <name evidence="10" type="synonym">KIAA1116</name>
    <name evidence="15" type="synonym">RBM16</name>
</gene>
<sequence>MEAVKTFNSELYSLNDYKPPISKAKMTQITKAAIKAIKFYKHVVQSVEKFIQKCKPEYKVPGLYVIDSIVRQSRHQFGQEKDVFAPRFSNNIISTFQNLYRCPGDDKSKIVRVLNLWQKNNVFKSEIIQPLLDMAAGIPPPVVTPVLASTTTAMSNTPGTPVTPVTPANVVQGLPDPWVSQITNTDTLAAVAQILQSPQGQQLQQLIQTLQIQQQKPQPSILQALDAGLVVQLQALTAQLTAAAAAANTLTPLEQGVSFNKKLMDRFDFGEDSEHSEEPKKEIPASQLSHVSESVNNSIFHQIAEQLQQQNLEHLRQQLLEQQQPQKATPQDSQEGTFGSEHSASPSQGSSQQHFLEPEVNLDDSIDIQQQDMDIDEGQDGVEEEVFEQEAKKVAVRSRSRTHSRSRSRSPRKRRSRSRSGSRKRKHRKRSRSRSRERKRKSSRSYSSERRAREREKERQKKGLPPIRSKTLSVCSTTLWVGQVDKKATQQDLTNLFEEFGQIESINMIPPRGCAYVCMVHRQDAFRALQKLSSGSYKIGSKVIKIAWALNKGVKTEYKQFWDVDLGVTYIPWEKVKVDDLEGFAEGGMIDQETVNTEWETVKSSEPVKETVQTTQSPTPVEKETVVTTQAEVFPPPVAMLQIPVAPAVPTVSLVPPAFPVSMPVPPPGFSPIPPPPFLRASFNPSQPPPGFMPPPVPPPVVPPPTIPPVVPTSLVQPSLSMTPETVKDVGFGSLVIPGGSVASNLATSALPAGNVFNAPTKQAEPEEKVPHLIDHQISSGENTRSVIPNDISSNAAILGGQPPNVTSNSGILGVQRPNVSSNSEILGVRPSNVSSSSGIIAAQPPNILNNSGILGIQPPSVSNSSGLLGVLPPNIPNNSGLVGVQPPNVPNTPGLLGTQPPAGPQNLPPLSIPNQRMPTMPMLDIRPGLIPQAPGPRFPLIQPGIPPQRGIPPPSVLDSALHPPPRGPFPPGDIFSQPERPFLAPGRQSVDNVTNPEKRIPLGNDNIQQEGDRDYRFPPIETRESISRPPPVDVRDVVGRPIDPREGPGRPPLDGRDHFGRPPVDIRENLVRPGIDHLGRRDHFGFNPEKPWGHRGDFDEREHRVLPVYGGPKGLHEERGRFRSGNYRFDPRSGPWNRGFGQEVHRDFDDRRRPWERQRDRDDRDFDFCREMNGNRLGRDRIQNTWVPPPHARVFDYFEGATSQRKGDNVPQVNGENTERHAQPPPIPVQNDPELYEKLTSSNEINKEKSDTVADIESEPVVESTETEGT</sequence>
<protein>
    <recommendedName>
        <fullName evidence="13">SR-related and CTD-associated factor 8</fullName>
    </recommendedName>
    <alternativeName>
        <fullName evidence="11">CDC5L complex-associated protein 7</fullName>
    </alternativeName>
    <alternativeName>
        <fullName evidence="14">RNA-binding motif protein 16</fullName>
    </alternativeName>
</protein>
<accession>Q9UPN6</accession>
<accession>B7Z888</accession>
<accession>Q5TBU6</accession>
<accession>Q6NSK3</accession>
<accession>Q9BQN8</accession>
<accession>Q9BX43</accession>
<evidence type="ECO:0000250" key="1">
    <source>
        <dbReference type="UniProtKB" id="Q6DID3"/>
    </source>
</evidence>
<evidence type="ECO:0000255" key="2">
    <source>
        <dbReference type="PROSITE-ProRule" id="PRU00176"/>
    </source>
</evidence>
<evidence type="ECO:0000255" key="3">
    <source>
        <dbReference type="PROSITE-ProRule" id="PRU00724"/>
    </source>
</evidence>
<evidence type="ECO:0000256" key="4">
    <source>
        <dbReference type="SAM" id="MobiDB-lite"/>
    </source>
</evidence>
<evidence type="ECO:0000269" key="5">
    <source>
    </source>
</evidence>
<evidence type="ECO:0000269" key="6">
    <source>
    </source>
</evidence>
<evidence type="ECO:0000269" key="7">
    <source>
    </source>
</evidence>
<evidence type="ECO:0000269" key="8">
    <source>
    </source>
</evidence>
<evidence type="ECO:0000269" key="9">
    <source>
    </source>
</evidence>
<evidence type="ECO:0000303" key="10">
    <source>
    </source>
</evidence>
<evidence type="ECO:0000303" key="11">
    <source>
    </source>
</evidence>
<evidence type="ECO:0000303" key="12">
    <source>
    </source>
</evidence>
<evidence type="ECO:0000303" key="13">
    <source>
    </source>
</evidence>
<evidence type="ECO:0000305" key="14"/>
<evidence type="ECO:0000312" key="15">
    <source>
        <dbReference type="HGNC" id="HGNC:20959"/>
    </source>
</evidence>
<evidence type="ECO:0007744" key="16">
    <source>
    </source>
</evidence>
<evidence type="ECO:0007744" key="17">
    <source>
    </source>
</evidence>
<evidence type="ECO:0007744" key="18">
    <source>
    </source>
</evidence>
<evidence type="ECO:0007744" key="19">
    <source>
    </source>
</evidence>
<evidence type="ECO:0007744" key="20">
    <source>
    </source>
</evidence>
<evidence type="ECO:0007829" key="21">
    <source>
        <dbReference type="PDB" id="3D9J"/>
    </source>
</evidence>
<name>SCAF8_HUMAN</name>
<dbReference type="EMBL" id="AB029039">
    <property type="protein sequence ID" value="BAA83068.2"/>
    <property type="status" value="ALT_INIT"/>
    <property type="molecule type" value="mRNA"/>
</dbReference>
<dbReference type="EMBL" id="AK303001">
    <property type="protein sequence ID" value="BAH13874.1"/>
    <property type="molecule type" value="mRNA"/>
</dbReference>
<dbReference type="EMBL" id="AL121952">
    <property type="status" value="NOT_ANNOTATED_CDS"/>
    <property type="molecule type" value="Genomic_DNA"/>
</dbReference>
<dbReference type="EMBL" id="AL136976">
    <property type="status" value="NOT_ANNOTATED_CDS"/>
    <property type="molecule type" value="Genomic_DNA"/>
</dbReference>
<dbReference type="EMBL" id="AL591499">
    <property type="status" value="NOT_ANNOTATED_CDS"/>
    <property type="molecule type" value="Genomic_DNA"/>
</dbReference>
<dbReference type="EMBL" id="BC070071">
    <property type="protein sequence ID" value="AAH70071.1"/>
    <property type="molecule type" value="mRNA"/>
</dbReference>
<dbReference type="CCDS" id="CCDS5247.1">
    <molecule id="Q9UPN6-1"/>
</dbReference>
<dbReference type="CCDS" id="CCDS69226.1">
    <molecule id="Q9UPN6-2"/>
</dbReference>
<dbReference type="RefSeq" id="NP_001273117.1">
    <property type="nucleotide sequence ID" value="NM_001286188.1"/>
</dbReference>
<dbReference type="RefSeq" id="NP_001273118.1">
    <molecule id="Q9UPN6-2"/>
    <property type="nucleotide sequence ID" value="NM_001286189.1"/>
</dbReference>
<dbReference type="RefSeq" id="NP_001273123.1">
    <property type="nucleotide sequence ID" value="NM_001286194.1"/>
</dbReference>
<dbReference type="RefSeq" id="NP_001273128.1">
    <molecule id="Q9UPN6-1"/>
    <property type="nucleotide sequence ID" value="NM_001286199.2"/>
</dbReference>
<dbReference type="RefSeq" id="NP_055707.3">
    <molecule id="Q9UPN6-1"/>
    <property type="nucleotide sequence ID" value="NM_014892.4"/>
</dbReference>
<dbReference type="PDB" id="2DIW">
    <property type="method" value="NMR"/>
    <property type="chains" value="A=1-137"/>
</dbReference>
<dbReference type="PDB" id="3D9I">
    <property type="method" value="X-ray"/>
    <property type="resolution" value="1.91 A"/>
    <property type="chains" value="A/B=1-136"/>
</dbReference>
<dbReference type="PDB" id="3D9J">
    <property type="method" value="X-ray"/>
    <property type="resolution" value="1.60 A"/>
    <property type="chains" value="A/B=1-136"/>
</dbReference>
<dbReference type="PDB" id="3D9K">
    <property type="method" value="X-ray"/>
    <property type="resolution" value="2.20 A"/>
    <property type="chains" value="A/B=1-136"/>
</dbReference>
<dbReference type="PDB" id="3D9L">
    <property type="method" value="X-ray"/>
    <property type="resolution" value="2.20 A"/>
    <property type="chains" value="A/B=1-136"/>
</dbReference>
<dbReference type="PDB" id="3D9M">
    <property type="method" value="X-ray"/>
    <property type="resolution" value="1.75 A"/>
    <property type="chains" value="A/B=1-136"/>
</dbReference>
<dbReference type="PDB" id="3D9N">
    <property type="method" value="X-ray"/>
    <property type="resolution" value="1.60 A"/>
    <property type="chains" value="A/B=1-136"/>
</dbReference>
<dbReference type="PDB" id="3D9O">
    <property type="method" value="X-ray"/>
    <property type="resolution" value="2.00 A"/>
    <property type="chains" value="A/B=1-136"/>
</dbReference>
<dbReference type="PDB" id="3D9P">
    <property type="method" value="X-ray"/>
    <property type="resolution" value="2.10 A"/>
    <property type="chains" value="A/B=1-136"/>
</dbReference>
<dbReference type="PDBsum" id="2DIW"/>
<dbReference type="PDBsum" id="3D9I"/>
<dbReference type="PDBsum" id="3D9J"/>
<dbReference type="PDBsum" id="3D9K"/>
<dbReference type="PDBsum" id="3D9L"/>
<dbReference type="PDBsum" id="3D9M"/>
<dbReference type="PDBsum" id="3D9N"/>
<dbReference type="PDBsum" id="3D9O"/>
<dbReference type="PDBsum" id="3D9P"/>
<dbReference type="SMR" id="Q9UPN6"/>
<dbReference type="BioGRID" id="116503">
    <property type="interactions" value="67"/>
</dbReference>
<dbReference type="CORUM" id="Q9UPN6"/>
<dbReference type="FunCoup" id="Q9UPN6">
    <property type="interactions" value="4837"/>
</dbReference>
<dbReference type="IntAct" id="Q9UPN6">
    <property type="interactions" value="31"/>
</dbReference>
<dbReference type="MINT" id="Q9UPN6"/>
<dbReference type="STRING" id="9606.ENSP00000413098"/>
<dbReference type="GlyCosmos" id="Q9UPN6">
    <property type="glycosylation" value="10 sites, 2 glycans"/>
</dbReference>
<dbReference type="GlyGen" id="Q9UPN6">
    <property type="glycosylation" value="17 sites, 1 N-linked glycan (1 site), 2 O-linked glycans (15 sites)"/>
</dbReference>
<dbReference type="iPTMnet" id="Q9UPN6"/>
<dbReference type="PhosphoSitePlus" id="Q9UPN6"/>
<dbReference type="BioMuta" id="SCAF8"/>
<dbReference type="DMDM" id="30580495"/>
<dbReference type="jPOST" id="Q9UPN6"/>
<dbReference type="MassIVE" id="Q9UPN6"/>
<dbReference type="PaxDb" id="9606-ENSP00000413098"/>
<dbReference type="PeptideAtlas" id="Q9UPN6"/>
<dbReference type="ProteomicsDB" id="6932"/>
<dbReference type="ProteomicsDB" id="85390">
    <molecule id="Q9UPN6-1"/>
</dbReference>
<dbReference type="Pumba" id="Q9UPN6"/>
<dbReference type="Antibodypedia" id="33407">
    <property type="antibodies" value="95 antibodies from 22 providers"/>
</dbReference>
<dbReference type="DNASU" id="22828"/>
<dbReference type="Ensembl" id="ENST00000367178.8">
    <molecule id="Q9UPN6-1"/>
    <property type="protein sequence ID" value="ENSP00000356146.3"/>
    <property type="gene ID" value="ENSG00000213079.10"/>
</dbReference>
<dbReference type="Ensembl" id="ENST00000367186.7">
    <molecule id="Q9UPN6-2"/>
    <property type="protein sequence ID" value="ENSP00000356154.4"/>
    <property type="gene ID" value="ENSG00000213079.10"/>
</dbReference>
<dbReference type="GeneID" id="22828"/>
<dbReference type="KEGG" id="hsa:22828"/>
<dbReference type="MANE-Select" id="ENST00000367178.8">
    <property type="protein sequence ID" value="ENSP00000356146.3"/>
    <property type="RefSeq nucleotide sequence ID" value="NM_014892.5"/>
    <property type="RefSeq protein sequence ID" value="NP_055707.3"/>
</dbReference>
<dbReference type="UCSC" id="uc003qpz.5">
    <molecule id="Q9UPN6-1"/>
    <property type="organism name" value="human"/>
</dbReference>
<dbReference type="AGR" id="HGNC:20959"/>
<dbReference type="CTD" id="22828"/>
<dbReference type="DisGeNET" id="22828"/>
<dbReference type="GeneCards" id="SCAF8"/>
<dbReference type="HGNC" id="HGNC:20959">
    <property type="gene designation" value="SCAF8"/>
</dbReference>
<dbReference type="HPA" id="ENSG00000213079">
    <property type="expression patterns" value="Low tissue specificity"/>
</dbReference>
<dbReference type="MIM" id="616024">
    <property type="type" value="gene"/>
</dbReference>
<dbReference type="neXtProt" id="NX_Q9UPN6"/>
<dbReference type="OpenTargets" id="ENSG00000213079"/>
<dbReference type="PharmGKB" id="PA128394587"/>
<dbReference type="VEuPathDB" id="HostDB:ENSG00000213079"/>
<dbReference type="eggNOG" id="KOG0132">
    <property type="taxonomic scope" value="Eukaryota"/>
</dbReference>
<dbReference type="GeneTree" id="ENSGT00530000063946"/>
<dbReference type="HOGENOM" id="CLU_005263_1_0_1"/>
<dbReference type="InParanoid" id="Q9UPN6"/>
<dbReference type="OrthoDB" id="79367at2759"/>
<dbReference type="PAN-GO" id="Q9UPN6">
    <property type="GO annotations" value="6 GO annotations based on evolutionary models"/>
</dbReference>
<dbReference type="PhylomeDB" id="Q9UPN6"/>
<dbReference type="TreeFam" id="TF324527"/>
<dbReference type="PathwayCommons" id="Q9UPN6"/>
<dbReference type="SignaLink" id="Q9UPN6"/>
<dbReference type="BioGRID-ORCS" id="22828">
    <property type="hits" value="46 hits in 1165 CRISPR screens"/>
</dbReference>
<dbReference type="ChiTaRS" id="SCAF8">
    <property type="organism name" value="human"/>
</dbReference>
<dbReference type="EvolutionaryTrace" id="Q9UPN6"/>
<dbReference type="GenomeRNAi" id="22828"/>
<dbReference type="Pharos" id="Q9UPN6">
    <property type="development level" value="Tbio"/>
</dbReference>
<dbReference type="PRO" id="PR:Q9UPN6"/>
<dbReference type="Proteomes" id="UP000005640">
    <property type="component" value="Chromosome 6"/>
</dbReference>
<dbReference type="RNAct" id="Q9UPN6">
    <property type="molecule type" value="protein"/>
</dbReference>
<dbReference type="Bgee" id="ENSG00000213079">
    <property type="expression patterns" value="Expressed in secondary oocyte and 218 other cell types or tissues"/>
</dbReference>
<dbReference type="ExpressionAtlas" id="Q9UPN6">
    <property type="expression patterns" value="baseline and differential"/>
</dbReference>
<dbReference type="GO" id="GO:0005737">
    <property type="term" value="C:cytoplasm"/>
    <property type="evidence" value="ECO:0000318"/>
    <property type="project" value="GO_Central"/>
</dbReference>
<dbReference type="GO" id="GO:0005849">
    <property type="term" value="C:mRNA cleavage factor complex"/>
    <property type="evidence" value="ECO:0000318"/>
    <property type="project" value="GO_Central"/>
</dbReference>
<dbReference type="GO" id="GO:0016363">
    <property type="term" value="C:nuclear matrix"/>
    <property type="evidence" value="ECO:0000250"/>
    <property type="project" value="UniProtKB"/>
</dbReference>
<dbReference type="GO" id="GO:0005654">
    <property type="term" value="C:nucleoplasm"/>
    <property type="evidence" value="ECO:0000314"/>
    <property type="project" value="HPA"/>
</dbReference>
<dbReference type="GO" id="GO:0005634">
    <property type="term" value="C:nucleus"/>
    <property type="evidence" value="ECO:0000314"/>
    <property type="project" value="UniProtKB"/>
</dbReference>
<dbReference type="GO" id="GO:0003729">
    <property type="term" value="F:mRNA binding"/>
    <property type="evidence" value="ECO:0000318"/>
    <property type="project" value="GO_Central"/>
</dbReference>
<dbReference type="GO" id="GO:0003723">
    <property type="term" value="F:RNA binding"/>
    <property type="evidence" value="ECO:0000314"/>
    <property type="project" value="UniProtKB"/>
</dbReference>
<dbReference type="GO" id="GO:0043175">
    <property type="term" value="F:RNA polymerase core enzyme binding"/>
    <property type="evidence" value="ECO:0000353"/>
    <property type="project" value="UniProtKB"/>
</dbReference>
<dbReference type="GO" id="GO:1990269">
    <property type="term" value="F:RNA polymerase II C-terminal domain phosphoserine binding"/>
    <property type="evidence" value="ECO:0000314"/>
    <property type="project" value="UniProtKB"/>
</dbReference>
<dbReference type="GO" id="GO:0000993">
    <property type="term" value="F:RNA polymerase II complex binding"/>
    <property type="evidence" value="ECO:0000318"/>
    <property type="project" value="GO_Central"/>
</dbReference>
<dbReference type="GO" id="GO:2000805">
    <property type="term" value="P:negative regulation of termination of RNA polymerase II transcription, poly(A)-coupled"/>
    <property type="evidence" value="ECO:0000314"/>
    <property type="project" value="UniProtKB"/>
</dbReference>
<dbReference type="GO" id="GO:0032786">
    <property type="term" value="P:positive regulation of DNA-templated transcription, elongation"/>
    <property type="evidence" value="ECO:0000314"/>
    <property type="project" value="UniProtKB"/>
</dbReference>
<dbReference type="GO" id="GO:0006369">
    <property type="term" value="P:termination of RNA polymerase II transcription"/>
    <property type="evidence" value="ECO:0000318"/>
    <property type="project" value="GO_Central"/>
</dbReference>
<dbReference type="CDD" id="cd17004">
    <property type="entry name" value="CID_SCAF8"/>
    <property type="match status" value="1"/>
</dbReference>
<dbReference type="CDD" id="cd12462">
    <property type="entry name" value="RRM_SCAF8"/>
    <property type="match status" value="1"/>
</dbReference>
<dbReference type="FunFam" id="1.25.40.90:FF:000004">
    <property type="entry name" value="splicing factor, arginine/serine-rich 15"/>
    <property type="match status" value="1"/>
</dbReference>
<dbReference type="FunFam" id="3.30.70.330:FF:000094">
    <property type="entry name" value="SR-related CTD associated factor 8"/>
    <property type="match status" value="1"/>
</dbReference>
<dbReference type="Gene3D" id="1.25.40.90">
    <property type="match status" value="1"/>
</dbReference>
<dbReference type="Gene3D" id="3.30.70.330">
    <property type="match status" value="1"/>
</dbReference>
<dbReference type="IDEAL" id="IID00590"/>
<dbReference type="InterPro" id="IPR006569">
    <property type="entry name" value="CID_dom"/>
</dbReference>
<dbReference type="InterPro" id="IPR008942">
    <property type="entry name" value="ENTH_VHS"/>
</dbReference>
<dbReference type="InterPro" id="IPR012677">
    <property type="entry name" value="Nucleotide-bd_a/b_plait_sf"/>
</dbReference>
<dbReference type="InterPro" id="IPR035979">
    <property type="entry name" value="RBD_domain_sf"/>
</dbReference>
<dbReference type="InterPro" id="IPR000504">
    <property type="entry name" value="RRM_dom"/>
</dbReference>
<dbReference type="InterPro" id="IPR034370">
    <property type="entry name" value="SCAF8_RRM"/>
</dbReference>
<dbReference type="InterPro" id="IPR051485">
    <property type="entry name" value="SR-CTD_assoc_factor"/>
</dbReference>
<dbReference type="PANTHER" id="PTHR23140">
    <property type="entry name" value="RNA PROCESSING PROTEIN LD23810P"/>
    <property type="match status" value="1"/>
</dbReference>
<dbReference type="PANTHER" id="PTHR23140:SF1">
    <property type="entry name" value="SR-RELATED CTD ASSOCIATED FACTOR 8"/>
    <property type="match status" value="1"/>
</dbReference>
<dbReference type="Pfam" id="PF04818">
    <property type="entry name" value="CID"/>
    <property type="match status" value="1"/>
</dbReference>
<dbReference type="Pfam" id="PF00076">
    <property type="entry name" value="RRM_1"/>
    <property type="match status" value="1"/>
</dbReference>
<dbReference type="SMART" id="SM00582">
    <property type="entry name" value="RPR"/>
    <property type="match status" value="1"/>
</dbReference>
<dbReference type="SMART" id="SM00360">
    <property type="entry name" value="RRM"/>
    <property type="match status" value="1"/>
</dbReference>
<dbReference type="SUPFAM" id="SSF48464">
    <property type="entry name" value="ENTH/VHS domain"/>
    <property type="match status" value="1"/>
</dbReference>
<dbReference type="SUPFAM" id="SSF54928">
    <property type="entry name" value="RNA-binding domain, RBD"/>
    <property type="match status" value="1"/>
</dbReference>
<dbReference type="PROSITE" id="PS51391">
    <property type="entry name" value="CID"/>
    <property type="match status" value="1"/>
</dbReference>
<dbReference type="PROSITE" id="PS50102">
    <property type="entry name" value="RRM"/>
    <property type="match status" value="1"/>
</dbReference>
<keyword id="KW-0002">3D-structure</keyword>
<keyword id="KW-0025">Alternative splicing</keyword>
<keyword id="KW-1017">Isopeptide bond</keyword>
<keyword id="KW-0488">Methylation</keyword>
<keyword id="KW-0539">Nucleus</keyword>
<keyword id="KW-0597">Phosphoprotein</keyword>
<keyword id="KW-1267">Proteomics identification</keyword>
<keyword id="KW-1185">Reference proteome</keyword>
<keyword id="KW-0694">RNA-binding</keyword>
<keyword id="KW-0804">Transcription</keyword>
<keyword id="KW-0805">Transcription regulation</keyword>
<keyword id="KW-0832">Ubl conjugation</keyword>
<feature type="chain" id="PRO_0000081780" description="SR-related and CTD-associated factor 8">
    <location>
        <begin position="1"/>
        <end position="1271"/>
    </location>
</feature>
<feature type="domain" description="CID" evidence="3">
    <location>
        <begin position="1"/>
        <end position="139"/>
    </location>
</feature>
<feature type="domain" description="RRM" evidence="2">
    <location>
        <begin position="477"/>
        <end position="551"/>
    </location>
</feature>
<feature type="region of interest" description="Disordered" evidence="4">
    <location>
        <begin position="270"/>
        <end position="289"/>
    </location>
</feature>
<feature type="region of interest" description="Disordered" evidence="4">
    <location>
        <begin position="322"/>
        <end position="354"/>
    </location>
</feature>
<feature type="region of interest" description="Disordered" evidence="4">
    <location>
        <begin position="384"/>
        <end position="468"/>
    </location>
</feature>
<feature type="region of interest" description="Disordered" evidence="4">
    <location>
        <begin position="899"/>
        <end position="918"/>
    </location>
</feature>
<feature type="region of interest" description="Disordered" evidence="4">
    <location>
        <begin position="945"/>
        <end position="1064"/>
    </location>
</feature>
<feature type="region of interest" description="Disordered" evidence="4">
    <location>
        <begin position="1198"/>
        <end position="1271"/>
    </location>
</feature>
<feature type="compositionally biased region" description="Basic and acidic residues" evidence="4">
    <location>
        <begin position="270"/>
        <end position="283"/>
    </location>
</feature>
<feature type="compositionally biased region" description="Polar residues" evidence="4">
    <location>
        <begin position="327"/>
        <end position="354"/>
    </location>
</feature>
<feature type="compositionally biased region" description="Basic residues" evidence="4">
    <location>
        <begin position="394"/>
        <end position="443"/>
    </location>
</feature>
<feature type="compositionally biased region" description="Basic and acidic residues" evidence="4">
    <location>
        <begin position="447"/>
        <end position="461"/>
    </location>
</feature>
<feature type="compositionally biased region" description="Pro residues" evidence="4">
    <location>
        <begin position="902"/>
        <end position="912"/>
    </location>
</feature>
<feature type="compositionally biased region" description="Pro residues" evidence="4">
    <location>
        <begin position="945"/>
        <end position="956"/>
    </location>
</feature>
<feature type="compositionally biased region" description="Pro residues" evidence="4">
    <location>
        <begin position="963"/>
        <end position="972"/>
    </location>
</feature>
<feature type="compositionally biased region" description="Basic and acidic residues" evidence="4">
    <location>
        <begin position="1011"/>
        <end position="1027"/>
    </location>
</feature>
<feature type="compositionally biased region" description="Basic and acidic residues" evidence="4">
    <location>
        <begin position="1034"/>
        <end position="1064"/>
    </location>
</feature>
<feature type="compositionally biased region" description="Acidic residues" evidence="4">
    <location>
        <begin position="1255"/>
        <end position="1271"/>
    </location>
</feature>
<feature type="modified residue" description="Phosphothreonine" evidence="7">
    <location>
        <position position="6"/>
    </location>
</feature>
<feature type="modified residue" description="Phosphoserine" evidence="19">
    <location>
        <position position="273"/>
    </location>
</feature>
<feature type="modified residue" description="Phosphothreonine" evidence="16">
    <location>
        <position position="615"/>
    </location>
</feature>
<feature type="modified residue" description="Phosphoserine" evidence="17 18 19">
    <location>
        <position position="617"/>
    </location>
</feature>
<feature type="modified residue" description="Phosphoserine" evidence="19">
    <location>
        <position position="779"/>
    </location>
</feature>
<feature type="modified residue" description="Asymmetric dimethylarginine" evidence="20">
    <location>
        <position position="917"/>
    </location>
</feature>
<feature type="modified residue" description="Asymmetric dimethylarginine" evidence="20">
    <location>
        <position position="927"/>
    </location>
</feature>
<feature type="modified residue" description="Asymmetric dimethylarginine" evidence="20">
    <location>
        <position position="938"/>
    </location>
</feature>
<feature type="modified residue" description="Asymmetric dimethylarginine" evidence="1">
    <location>
        <position position="1073"/>
    </location>
</feature>
<feature type="cross-link" description="Glycyl lysine isopeptide (Lys-Gly) (interchain with G-Cter in SUMO1)">
    <location>
        <position position="18"/>
    </location>
</feature>
<feature type="splice variant" id="VSP_056149" description="In isoform 2." evidence="12">
    <original>M</original>
    <variation>MPQPLLPALPPLSSPSGAGSCGPSGGECSGRRLFRRRARGLRSDNM</variation>
    <location>
        <position position="1"/>
    </location>
</feature>
<feature type="splice variant" id="VSP_056150" description="In isoform 2." evidence="12">
    <original>E</original>
    <variation>EDCASTPACTDCFSSSMDTRSI</variation>
    <location>
        <position position="10"/>
    </location>
</feature>
<feature type="sequence variant" id="VAR_052220" description="In dbSNP:rs34802160.">
    <original>S</original>
    <variation>N</variation>
    <location>
        <position position="865"/>
    </location>
</feature>
<feature type="sequence conflict" description="In Ref. 4; AAH70071." evidence="14" ref="4">
    <original>N</original>
    <variation>I</variation>
    <location>
        <position position="297"/>
    </location>
</feature>
<feature type="helix" evidence="21">
    <location>
        <begin position="3"/>
        <end position="12"/>
    </location>
</feature>
<feature type="helix" evidence="21">
    <location>
        <begin position="13"/>
        <end position="16"/>
    </location>
</feature>
<feature type="helix" evidence="21">
    <location>
        <begin position="23"/>
        <end position="35"/>
    </location>
</feature>
<feature type="helix" evidence="21">
    <location>
        <begin position="37"/>
        <end position="39"/>
    </location>
</feature>
<feature type="helix" evidence="21">
    <location>
        <begin position="40"/>
        <end position="53"/>
    </location>
</feature>
<feature type="helix" evidence="21">
    <location>
        <begin position="56"/>
        <end position="58"/>
    </location>
</feature>
<feature type="helix" evidence="21">
    <location>
        <begin position="59"/>
        <end position="77"/>
    </location>
</feature>
<feature type="turn" evidence="21">
    <location>
        <begin position="79"/>
        <end position="81"/>
    </location>
</feature>
<feature type="helix" evidence="21">
    <location>
        <begin position="84"/>
        <end position="89"/>
    </location>
</feature>
<feature type="helix" evidence="21">
    <location>
        <begin position="92"/>
        <end position="99"/>
    </location>
</feature>
<feature type="helix" evidence="21">
    <location>
        <begin position="104"/>
        <end position="106"/>
    </location>
</feature>
<feature type="helix" evidence="21">
    <location>
        <begin position="107"/>
        <end position="119"/>
    </location>
</feature>
<feature type="helix" evidence="21">
    <location>
        <begin position="125"/>
        <end position="136"/>
    </location>
</feature>
<reference key="1">
    <citation type="journal article" date="1999" name="DNA Res.">
        <title>Prediction of the coding sequences of unidentified human genes. XIV. The complete sequences of 100 new cDNA clones from brain which code for large proteins in vitro.</title>
        <authorList>
            <person name="Kikuno R."/>
            <person name="Nagase T."/>
            <person name="Ishikawa K."/>
            <person name="Hirosawa M."/>
            <person name="Miyajima N."/>
            <person name="Tanaka A."/>
            <person name="Kotani H."/>
            <person name="Nomura N."/>
            <person name="Ohara O."/>
        </authorList>
    </citation>
    <scope>NUCLEOTIDE SEQUENCE [LARGE SCALE MRNA] (ISOFORM 1)</scope>
    <source>
        <tissue>Brain</tissue>
    </source>
</reference>
<reference key="2">
    <citation type="journal article" date="2004" name="Nat. Genet.">
        <title>Complete sequencing and characterization of 21,243 full-length human cDNAs.</title>
        <authorList>
            <person name="Ota T."/>
            <person name="Suzuki Y."/>
            <person name="Nishikawa T."/>
            <person name="Otsuki T."/>
            <person name="Sugiyama T."/>
            <person name="Irie R."/>
            <person name="Wakamatsu A."/>
            <person name="Hayashi K."/>
            <person name="Sato H."/>
            <person name="Nagai K."/>
            <person name="Kimura K."/>
            <person name="Makita H."/>
            <person name="Sekine M."/>
            <person name="Obayashi M."/>
            <person name="Nishi T."/>
            <person name="Shibahara T."/>
            <person name="Tanaka T."/>
            <person name="Ishii S."/>
            <person name="Yamamoto J."/>
            <person name="Saito K."/>
            <person name="Kawai Y."/>
            <person name="Isono Y."/>
            <person name="Nakamura Y."/>
            <person name="Nagahari K."/>
            <person name="Murakami K."/>
            <person name="Yasuda T."/>
            <person name="Iwayanagi T."/>
            <person name="Wagatsuma M."/>
            <person name="Shiratori A."/>
            <person name="Sudo H."/>
            <person name="Hosoiri T."/>
            <person name="Kaku Y."/>
            <person name="Kodaira H."/>
            <person name="Kondo H."/>
            <person name="Sugawara M."/>
            <person name="Takahashi M."/>
            <person name="Kanda K."/>
            <person name="Yokoi T."/>
            <person name="Furuya T."/>
            <person name="Kikkawa E."/>
            <person name="Omura Y."/>
            <person name="Abe K."/>
            <person name="Kamihara K."/>
            <person name="Katsuta N."/>
            <person name="Sato K."/>
            <person name="Tanikawa M."/>
            <person name="Yamazaki M."/>
            <person name="Ninomiya K."/>
            <person name="Ishibashi T."/>
            <person name="Yamashita H."/>
            <person name="Murakawa K."/>
            <person name="Fujimori K."/>
            <person name="Tanai H."/>
            <person name="Kimata M."/>
            <person name="Watanabe M."/>
            <person name="Hiraoka S."/>
            <person name="Chiba Y."/>
            <person name="Ishida S."/>
            <person name="Ono Y."/>
            <person name="Takiguchi S."/>
            <person name="Watanabe S."/>
            <person name="Yosida M."/>
            <person name="Hotuta T."/>
            <person name="Kusano J."/>
            <person name="Kanehori K."/>
            <person name="Takahashi-Fujii A."/>
            <person name="Hara H."/>
            <person name="Tanase T.-O."/>
            <person name="Nomura Y."/>
            <person name="Togiya S."/>
            <person name="Komai F."/>
            <person name="Hara R."/>
            <person name="Takeuchi K."/>
            <person name="Arita M."/>
            <person name="Imose N."/>
            <person name="Musashino K."/>
            <person name="Yuuki H."/>
            <person name="Oshima A."/>
            <person name="Sasaki N."/>
            <person name="Aotsuka S."/>
            <person name="Yoshikawa Y."/>
            <person name="Matsunawa H."/>
            <person name="Ichihara T."/>
            <person name="Shiohata N."/>
            <person name="Sano S."/>
            <person name="Moriya S."/>
            <person name="Momiyama H."/>
            <person name="Satoh N."/>
            <person name="Takami S."/>
            <person name="Terashima Y."/>
            <person name="Suzuki O."/>
            <person name="Nakagawa S."/>
            <person name="Senoh A."/>
            <person name="Mizoguchi H."/>
            <person name="Goto Y."/>
            <person name="Shimizu F."/>
            <person name="Wakebe H."/>
            <person name="Hishigaki H."/>
            <person name="Watanabe T."/>
            <person name="Sugiyama A."/>
            <person name="Takemoto M."/>
            <person name="Kawakami B."/>
            <person name="Yamazaki M."/>
            <person name="Watanabe K."/>
            <person name="Kumagai A."/>
            <person name="Itakura S."/>
            <person name="Fukuzumi Y."/>
            <person name="Fujimori Y."/>
            <person name="Komiyama M."/>
            <person name="Tashiro H."/>
            <person name="Tanigami A."/>
            <person name="Fujiwara T."/>
            <person name="Ono T."/>
            <person name="Yamada K."/>
            <person name="Fujii Y."/>
            <person name="Ozaki K."/>
            <person name="Hirao M."/>
            <person name="Ohmori Y."/>
            <person name="Kawabata A."/>
            <person name="Hikiji T."/>
            <person name="Kobatake N."/>
            <person name="Inagaki H."/>
            <person name="Ikema Y."/>
            <person name="Okamoto S."/>
            <person name="Okitani R."/>
            <person name="Kawakami T."/>
            <person name="Noguchi S."/>
            <person name="Itoh T."/>
            <person name="Shigeta K."/>
            <person name="Senba T."/>
            <person name="Matsumura K."/>
            <person name="Nakajima Y."/>
            <person name="Mizuno T."/>
            <person name="Morinaga M."/>
            <person name="Sasaki M."/>
            <person name="Togashi T."/>
            <person name="Oyama M."/>
            <person name="Hata H."/>
            <person name="Watanabe M."/>
            <person name="Komatsu T."/>
            <person name="Mizushima-Sugano J."/>
            <person name="Satoh T."/>
            <person name="Shirai Y."/>
            <person name="Takahashi Y."/>
            <person name="Nakagawa K."/>
            <person name="Okumura K."/>
            <person name="Nagase T."/>
            <person name="Nomura N."/>
            <person name="Kikuchi H."/>
            <person name="Masuho Y."/>
            <person name="Yamashita R."/>
            <person name="Nakai K."/>
            <person name="Yada T."/>
            <person name="Nakamura Y."/>
            <person name="Ohara O."/>
            <person name="Isogai T."/>
            <person name="Sugano S."/>
        </authorList>
    </citation>
    <scope>NUCLEOTIDE SEQUENCE [LARGE SCALE MRNA] (ISOFORM 2)</scope>
    <source>
        <tissue>Testis</tissue>
    </source>
</reference>
<reference key="3">
    <citation type="journal article" date="2003" name="Nature">
        <title>The DNA sequence and analysis of human chromosome 6.</title>
        <authorList>
            <person name="Mungall A.J."/>
            <person name="Palmer S.A."/>
            <person name="Sims S.K."/>
            <person name="Edwards C.A."/>
            <person name="Ashurst J.L."/>
            <person name="Wilming L."/>
            <person name="Jones M.C."/>
            <person name="Horton R."/>
            <person name="Hunt S.E."/>
            <person name="Scott C.E."/>
            <person name="Gilbert J.G.R."/>
            <person name="Clamp M.E."/>
            <person name="Bethel G."/>
            <person name="Milne S."/>
            <person name="Ainscough R."/>
            <person name="Almeida J.P."/>
            <person name="Ambrose K.D."/>
            <person name="Andrews T.D."/>
            <person name="Ashwell R.I.S."/>
            <person name="Babbage A.K."/>
            <person name="Bagguley C.L."/>
            <person name="Bailey J."/>
            <person name="Banerjee R."/>
            <person name="Barker D.J."/>
            <person name="Barlow K.F."/>
            <person name="Bates K."/>
            <person name="Beare D.M."/>
            <person name="Beasley H."/>
            <person name="Beasley O."/>
            <person name="Bird C.P."/>
            <person name="Blakey S.E."/>
            <person name="Bray-Allen S."/>
            <person name="Brook J."/>
            <person name="Brown A.J."/>
            <person name="Brown J.Y."/>
            <person name="Burford D.C."/>
            <person name="Burrill W."/>
            <person name="Burton J."/>
            <person name="Carder C."/>
            <person name="Carter N.P."/>
            <person name="Chapman J.C."/>
            <person name="Clark S.Y."/>
            <person name="Clark G."/>
            <person name="Clee C.M."/>
            <person name="Clegg S."/>
            <person name="Cobley V."/>
            <person name="Collier R.E."/>
            <person name="Collins J.E."/>
            <person name="Colman L.K."/>
            <person name="Corby N.R."/>
            <person name="Coville G.J."/>
            <person name="Culley K.M."/>
            <person name="Dhami P."/>
            <person name="Davies J."/>
            <person name="Dunn M."/>
            <person name="Earthrowl M.E."/>
            <person name="Ellington A.E."/>
            <person name="Evans K.A."/>
            <person name="Faulkner L."/>
            <person name="Francis M.D."/>
            <person name="Frankish A."/>
            <person name="Frankland J."/>
            <person name="French L."/>
            <person name="Garner P."/>
            <person name="Garnett J."/>
            <person name="Ghori M.J."/>
            <person name="Gilby L.M."/>
            <person name="Gillson C.J."/>
            <person name="Glithero R.J."/>
            <person name="Grafham D.V."/>
            <person name="Grant M."/>
            <person name="Gribble S."/>
            <person name="Griffiths C."/>
            <person name="Griffiths M.N.D."/>
            <person name="Hall R."/>
            <person name="Halls K.S."/>
            <person name="Hammond S."/>
            <person name="Harley J.L."/>
            <person name="Hart E.A."/>
            <person name="Heath P.D."/>
            <person name="Heathcott R."/>
            <person name="Holmes S.J."/>
            <person name="Howden P.J."/>
            <person name="Howe K.L."/>
            <person name="Howell G.R."/>
            <person name="Huckle E."/>
            <person name="Humphray S.J."/>
            <person name="Humphries M.D."/>
            <person name="Hunt A.R."/>
            <person name="Johnson C.M."/>
            <person name="Joy A.A."/>
            <person name="Kay M."/>
            <person name="Keenan S.J."/>
            <person name="Kimberley A.M."/>
            <person name="King A."/>
            <person name="Laird G.K."/>
            <person name="Langford C."/>
            <person name="Lawlor S."/>
            <person name="Leongamornlert D.A."/>
            <person name="Leversha M."/>
            <person name="Lloyd C.R."/>
            <person name="Lloyd D.M."/>
            <person name="Loveland J.E."/>
            <person name="Lovell J."/>
            <person name="Martin S."/>
            <person name="Mashreghi-Mohammadi M."/>
            <person name="Maslen G.L."/>
            <person name="Matthews L."/>
            <person name="McCann O.T."/>
            <person name="McLaren S.J."/>
            <person name="McLay K."/>
            <person name="McMurray A."/>
            <person name="Moore M.J.F."/>
            <person name="Mullikin J.C."/>
            <person name="Niblett D."/>
            <person name="Nickerson T."/>
            <person name="Novik K.L."/>
            <person name="Oliver K."/>
            <person name="Overton-Larty E.K."/>
            <person name="Parker A."/>
            <person name="Patel R."/>
            <person name="Pearce A.V."/>
            <person name="Peck A.I."/>
            <person name="Phillimore B.J.C.T."/>
            <person name="Phillips S."/>
            <person name="Plumb R.W."/>
            <person name="Porter K.M."/>
            <person name="Ramsey Y."/>
            <person name="Ranby S.A."/>
            <person name="Rice C.M."/>
            <person name="Ross M.T."/>
            <person name="Searle S.M."/>
            <person name="Sehra H.K."/>
            <person name="Sheridan E."/>
            <person name="Skuce C.D."/>
            <person name="Smith S."/>
            <person name="Smith M."/>
            <person name="Spraggon L."/>
            <person name="Squares S.L."/>
            <person name="Steward C.A."/>
            <person name="Sycamore N."/>
            <person name="Tamlyn-Hall G."/>
            <person name="Tester J."/>
            <person name="Theaker A.J."/>
            <person name="Thomas D.W."/>
            <person name="Thorpe A."/>
            <person name="Tracey A."/>
            <person name="Tromans A."/>
            <person name="Tubby B."/>
            <person name="Wall M."/>
            <person name="Wallis J.M."/>
            <person name="West A.P."/>
            <person name="White S.S."/>
            <person name="Whitehead S.L."/>
            <person name="Whittaker H."/>
            <person name="Wild A."/>
            <person name="Willey D.J."/>
            <person name="Wilmer T.E."/>
            <person name="Wood J.M."/>
            <person name="Wray P.W."/>
            <person name="Wyatt J.C."/>
            <person name="Young L."/>
            <person name="Younger R.M."/>
            <person name="Bentley D.R."/>
            <person name="Coulson A."/>
            <person name="Durbin R.M."/>
            <person name="Hubbard T."/>
            <person name="Sulston J.E."/>
            <person name="Dunham I."/>
            <person name="Rogers J."/>
            <person name="Beck S."/>
        </authorList>
    </citation>
    <scope>NUCLEOTIDE SEQUENCE [LARGE SCALE GENOMIC DNA]</scope>
</reference>
<reference key="4">
    <citation type="journal article" date="2004" name="Genome Res.">
        <title>The status, quality, and expansion of the NIH full-length cDNA project: the Mammalian Gene Collection (MGC).</title>
        <authorList>
            <consortium name="The MGC Project Team"/>
        </authorList>
    </citation>
    <scope>NUCLEOTIDE SEQUENCE [LARGE SCALE MRNA] (ISOFORM 1)</scope>
    <source>
        <tissue>Testis</tissue>
    </source>
</reference>
<reference key="5">
    <citation type="journal article" date="1998" name="Mol. Cell. Biol.">
        <title>A nuclear matrix protein interacts with the phosphorylated C-terminal domain of RNA polymerase II.</title>
        <authorList>
            <person name="Patturajan M."/>
            <person name="Wei X."/>
            <person name="Berezney R."/>
            <person name="Corden J.L."/>
        </authorList>
    </citation>
    <scope>INTERACTION WITH POLR2A</scope>
    <scope>SUBCELLULAR LOCATION</scope>
</reference>
<reference key="6">
    <citation type="journal article" date="2000" name="EMBO J.">
        <title>Functional analysis of the human CDC5L complex and identification of its components by mass spectrometry.</title>
        <authorList>
            <person name="Ajuh P."/>
            <person name="Kuster B."/>
            <person name="Panov K."/>
            <person name="Zomerdijk J.C.B.M."/>
            <person name="Mann M."/>
            <person name="Lamond A.I."/>
        </authorList>
    </citation>
    <scope>IDENTIFICATION IN A COMPLEX WITH CDC5L AND SPLICEOSOMAL PROTEINS</scope>
    <scope>SUBUNIT</scope>
    <scope>SUBCELLULAR LOCATION</scope>
    <scope>IDENTIFICATION BY MASS SPECTROMETRY</scope>
</reference>
<reference key="7">
    <citation type="journal article" date="2006" name="Cell">
        <title>Global, in vivo, and site-specific phosphorylation dynamics in signaling networks.</title>
        <authorList>
            <person name="Olsen J.V."/>
            <person name="Blagoev B."/>
            <person name="Gnad F."/>
            <person name="Macek B."/>
            <person name="Kumar C."/>
            <person name="Mortensen P."/>
            <person name="Mann M."/>
        </authorList>
    </citation>
    <scope>IDENTIFICATION BY MASS SPECTROMETRY [LARGE SCALE ANALYSIS]</scope>
    <source>
        <tissue>Cervix carcinoma</tissue>
    </source>
</reference>
<reference key="8">
    <citation type="journal article" date="2007" name="Science">
        <title>ATM and ATR substrate analysis reveals extensive protein networks responsive to DNA damage.</title>
        <authorList>
            <person name="Matsuoka S."/>
            <person name="Ballif B.A."/>
            <person name="Smogorzewska A."/>
            <person name="McDonald E.R. III"/>
            <person name="Hurov K.E."/>
            <person name="Luo J."/>
            <person name="Bakalarski C.E."/>
            <person name="Zhao Z."/>
            <person name="Solimini N."/>
            <person name="Lerenthal Y."/>
            <person name="Shiloh Y."/>
            <person name="Gygi S.P."/>
            <person name="Elledge S.J."/>
        </authorList>
    </citation>
    <scope>PHOSPHORYLATION [LARGE SCALE ANALYSIS] AT THR-615</scope>
    <scope>IDENTIFICATION BY MASS SPECTROMETRY [LARGE SCALE ANALYSIS]</scope>
    <source>
        <tissue>Embryonic kidney</tissue>
    </source>
</reference>
<reference key="9">
    <citation type="journal article" date="2008" name="Proc. Natl. Acad. Sci. U.S.A.">
        <title>A quantitative atlas of mitotic phosphorylation.</title>
        <authorList>
            <person name="Dephoure N."/>
            <person name="Zhou C."/>
            <person name="Villen J."/>
            <person name="Beausoleil S.A."/>
            <person name="Bakalarski C.E."/>
            <person name="Elledge S.J."/>
            <person name="Gygi S.P."/>
        </authorList>
    </citation>
    <scope>PHOSPHORYLATION [LARGE SCALE ANALYSIS] AT SER-617</scope>
    <scope>IDENTIFICATION BY MASS SPECTROMETRY [LARGE SCALE ANALYSIS]</scope>
    <source>
        <tissue>Cervix carcinoma</tissue>
    </source>
</reference>
<reference key="10">
    <citation type="journal article" date="2009" name="Anal. Chem.">
        <title>Lys-N and trypsin cover complementary parts of the phosphoproteome in a refined SCX-based approach.</title>
        <authorList>
            <person name="Gauci S."/>
            <person name="Helbig A.O."/>
            <person name="Slijper M."/>
            <person name="Krijgsveld J."/>
            <person name="Heck A.J."/>
            <person name="Mohammed S."/>
        </authorList>
    </citation>
    <scope>IDENTIFICATION BY MASS SPECTROMETRY [LARGE SCALE ANALYSIS]</scope>
</reference>
<reference key="11">
    <citation type="journal article" date="2010" name="J. Biol. Chem.">
        <title>In vivo identification of sumoylation sites by a signature tag and cysteine-targeted affinity purification.</title>
        <authorList>
            <person name="Blomster H.A."/>
            <person name="Imanishi S.Y."/>
            <person name="Siimes J."/>
            <person name="Kastu J."/>
            <person name="Morrice N.A."/>
            <person name="Eriksson J.E."/>
            <person name="Sistonen L."/>
        </authorList>
    </citation>
    <scope>SUMOYLATION AT LYS-18</scope>
    <scope>PHOSPHORYLATION AT THR-6</scope>
    <source>
        <tissue>Cervix carcinoma</tissue>
    </source>
</reference>
<reference key="12">
    <citation type="journal article" date="2010" name="Sci. Signal.">
        <title>Quantitative phosphoproteomics reveals widespread full phosphorylation site occupancy during mitosis.</title>
        <authorList>
            <person name="Olsen J.V."/>
            <person name="Vermeulen M."/>
            <person name="Santamaria A."/>
            <person name="Kumar C."/>
            <person name="Miller M.L."/>
            <person name="Jensen L.J."/>
            <person name="Gnad F."/>
            <person name="Cox J."/>
            <person name="Jensen T.S."/>
            <person name="Nigg E.A."/>
            <person name="Brunak S."/>
            <person name="Mann M."/>
        </authorList>
    </citation>
    <scope>IDENTIFICATION BY MASS SPECTROMETRY [LARGE SCALE ANALYSIS]</scope>
    <source>
        <tissue>Cervix carcinoma</tissue>
    </source>
</reference>
<reference key="13">
    <citation type="journal article" date="2011" name="BMC Syst. Biol.">
        <title>Initial characterization of the human central proteome.</title>
        <authorList>
            <person name="Burkard T.R."/>
            <person name="Planyavsky M."/>
            <person name="Kaupe I."/>
            <person name="Breitwieser F.P."/>
            <person name="Buerckstuemmer T."/>
            <person name="Bennett K.L."/>
            <person name="Superti-Furga G."/>
            <person name="Colinge J."/>
        </authorList>
    </citation>
    <scope>IDENTIFICATION BY MASS SPECTROMETRY [LARGE SCALE ANALYSIS]</scope>
</reference>
<reference key="14">
    <citation type="journal article" date="2011" name="Sci. Signal.">
        <title>System-wide temporal characterization of the proteome and phosphoproteome of human embryonic stem cell differentiation.</title>
        <authorList>
            <person name="Rigbolt K.T."/>
            <person name="Prokhorova T.A."/>
            <person name="Akimov V."/>
            <person name="Henningsen J."/>
            <person name="Johansen P.T."/>
            <person name="Kratchmarova I."/>
            <person name="Kassem M."/>
            <person name="Mann M."/>
            <person name="Olsen J.V."/>
            <person name="Blagoev B."/>
        </authorList>
    </citation>
    <scope>PHOSPHORYLATION [LARGE SCALE ANALYSIS] AT SER-617</scope>
    <scope>IDENTIFICATION BY MASS SPECTROMETRY [LARGE SCALE ANALYSIS]</scope>
</reference>
<reference key="15">
    <citation type="journal article" date="2013" name="J. Proteome Res.">
        <title>Toward a comprehensive characterization of a human cancer cell phosphoproteome.</title>
        <authorList>
            <person name="Zhou H."/>
            <person name="Di Palma S."/>
            <person name="Preisinger C."/>
            <person name="Peng M."/>
            <person name="Polat A.N."/>
            <person name="Heck A.J."/>
            <person name="Mohammed S."/>
        </authorList>
    </citation>
    <scope>PHOSPHORYLATION [LARGE SCALE ANALYSIS] AT SER-273; SER-617 AND SER-779</scope>
    <scope>IDENTIFICATION BY MASS SPECTROMETRY [LARGE SCALE ANALYSIS]</scope>
    <source>
        <tissue>Cervix carcinoma</tissue>
        <tissue>Erythroleukemia</tissue>
    </source>
</reference>
<reference key="16">
    <citation type="journal article" date="2014" name="J. Proteomics">
        <title>An enzyme assisted RP-RPLC approach for in-depth analysis of human liver phosphoproteome.</title>
        <authorList>
            <person name="Bian Y."/>
            <person name="Song C."/>
            <person name="Cheng K."/>
            <person name="Dong M."/>
            <person name="Wang F."/>
            <person name="Huang J."/>
            <person name="Sun D."/>
            <person name="Wang L."/>
            <person name="Ye M."/>
            <person name="Zou H."/>
        </authorList>
    </citation>
    <scope>IDENTIFICATION BY MASS SPECTROMETRY [LARGE SCALE ANALYSIS]</scope>
    <source>
        <tissue>Liver</tissue>
    </source>
</reference>
<reference key="17">
    <citation type="journal article" date="2014" name="Mol. Cell. Proteomics">
        <title>Immunoaffinity enrichment and mass spectrometry analysis of protein methylation.</title>
        <authorList>
            <person name="Guo A."/>
            <person name="Gu H."/>
            <person name="Zhou J."/>
            <person name="Mulhern D."/>
            <person name="Wang Y."/>
            <person name="Lee K.A."/>
            <person name="Yang V."/>
            <person name="Aguiar M."/>
            <person name="Kornhauser J."/>
            <person name="Jia X."/>
            <person name="Ren J."/>
            <person name="Beausoleil S.A."/>
            <person name="Silva J.C."/>
            <person name="Vemulapalli V."/>
            <person name="Bedford M.T."/>
            <person name="Comb M.J."/>
        </authorList>
    </citation>
    <scope>METHYLATION [LARGE SCALE ANALYSIS] AT ARG-917; ARG-927 AND ARG-938</scope>
    <scope>IDENTIFICATION BY MASS SPECTROMETRY [LARGE SCALE ANALYSIS]</scope>
    <source>
        <tissue>Colon carcinoma</tissue>
    </source>
</reference>
<reference key="18">
    <citation type="submission" date="2006-09" db="PDB data bank">
        <title>Solution structure of the RPR domain of putative RNA-binding protein 16.</title>
        <authorList>
            <consortium name="RIKEN structural genomics initiative (RSGI)"/>
        </authorList>
    </citation>
    <scope>STRUCTURE BY NMR OF 1-140</scope>
</reference>
<reference key="19">
    <citation type="journal article" date="2008" name="J. Biol. Chem.">
        <title>Snapshots of the RNA processing factor SCAF8 bound to different phosphorylated forms of the carboxyl-terminal domain of RNA polymerase II.</title>
        <authorList>
            <person name="Becker R."/>
            <person name="Loll B."/>
            <person name="Meinhart A."/>
        </authorList>
    </citation>
    <scope>X-RAY CRYSTALLOGRAPHY (1.6 ANGSTROMS) OF 1-136 IN COMPLEX WITH POLR2A PEPTIDE</scope>
    <scope>INTERACTION WITH POLR2A</scope>
    <scope>SUBUNIT</scope>
</reference>
<reference key="20">
    <citation type="journal article" date="2019" name="Cell">
        <title>SCAF4 and SCAF8, mRNA anti-terminator proteins.</title>
        <authorList>
            <person name="Gregersen L.H."/>
            <person name="Mitter R."/>
            <person name="Ugalde A.P."/>
            <person name="Nojima T."/>
            <person name="Proudfoot N.J."/>
            <person name="Agami R."/>
            <person name="Stewart A."/>
            <person name="Svejstrup J.Q."/>
        </authorList>
    </citation>
    <scope>FUNCTION</scope>
    <scope>SUBCELLULAR LOCATION</scope>
    <scope>INTERACTION WITH POLR2A</scope>
</reference>
<comment type="function">
    <text evidence="8">Anti-terminator protein required to prevent early mRNA termination during transcription (PubMed:31104839). Together with SCAF4, acts by suppressing the use of early, alternative poly(A) sites, thereby preventing the accumulation of non-functional truncated proteins (PubMed:31104839). Mechanistically, associates with the phosphorylated C-terminal heptapeptide repeat domain (CTD) of the largest RNA polymerase II subunit (POLR2A), and subsequently binds nascent RNA upstream of early polyadenylation sites to prevent premature mRNA transcript cleavage and polyadenylation (PubMed:31104839). Independently of SCAF4, also acts as a positive regulator of transcript elongation (PubMed:31104839).</text>
</comment>
<comment type="subunit">
    <text evidence="5 6 8 9">Interacts with POLR2A; via C-terminal heptapeptide repeat domain (CTD) phosphorylated at 'Ser-2' and 'Ser-5' (PubMed:18550522, PubMed:31104839, PubMed:9528809). Identified in a complex with CDC5L and other spliceosomal proteins (PubMed:11101529).</text>
</comment>
<comment type="interaction">
    <interactant intactId="EBI-7954236">
        <id>Q9UPN6</id>
    </interactant>
    <interactant intactId="EBI-748356">
        <id>Q9ULA0</id>
        <label>DNPEP</label>
    </interactant>
    <organismsDiffer>false</organismsDiffer>
    <experiments>2</experiments>
</comment>
<comment type="interaction">
    <interactant intactId="EBI-7954236">
        <id>Q9UPN6</id>
    </interactant>
    <interactant intactId="EBI-947774">
        <id>O75420</id>
        <label>GIGYF1</label>
    </interactant>
    <organismsDiffer>false</organismsDiffer>
    <experiments>3</experiments>
</comment>
<comment type="interaction">
    <interactant intactId="EBI-7954236">
        <id>Q9UPN6</id>
    </interactant>
    <interactant intactId="EBI-618309">
        <id>Q08379</id>
        <label>GOLGA2</label>
    </interactant>
    <organismsDiffer>false</organismsDiffer>
    <experiments>4</experiments>
</comment>
<comment type="interaction">
    <interactant intactId="EBI-7954236">
        <id>Q9UPN6</id>
    </interactant>
    <interactant intactId="EBI-11523345">
        <id>Q8IYF3-3</id>
        <label>TEX11</label>
    </interactant>
    <organismsDiffer>false</organismsDiffer>
    <experiments>3</experiments>
</comment>
<comment type="subcellular location">
    <subcellularLocation>
        <location evidence="5 8 9">Nucleus</location>
    </subcellularLocation>
    <subcellularLocation>
        <location evidence="9">Nucleus matrix</location>
    </subcellularLocation>
    <text evidence="8 9">Detected in granular nuclear foci which correspond to sites of active transcription.</text>
</comment>
<comment type="alternative products">
    <event type="alternative splicing"/>
    <isoform>
        <id>Q9UPN6-1</id>
        <name>1</name>
        <sequence type="displayed"/>
    </isoform>
    <isoform>
        <id>Q9UPN6-2</id>
        <name>2</name>
        <sequence type="described" ref="VSP_056149 VSP_056150"/>
    </isoform>
</comment>
<comment type="sequence caution" evidence="14">
    <conflict type="erroneous initiation">
        <sequence resource="EMBL-CDS" id="BAA83068"/>
    </conflict>
</comment>
<proteinExistence type="evidence at protein level"/>